<keyword id="KW-0002">3D-structure</keyword>
<keyword id="KW-0963">Cytoplasm</keyword>
<keyword id="KW-0238">DNA-binding</keyword>
<keyword id="KW-0240">DNA-directed RNA polymerase</keyword>
<keyword id="KW-0548">Nucleotidyltransferase</keyword>
<keyword id="KW-0804">Transcription</keyword>
<keyword id="KW-0808">Transferase</keyword>
<comment type="function">
    <text evidence="1 2 3 4">DNA-dependent RNA polymerase (RNAP) catalyzes the transcription of DNA into RNA using the four ribonucleoside triphosphates as substrates. Forms part of the jaw domain.</text>
</comment>
<comment type="catalytic activity">
    <reaction evidence="1">
        <text>RNA(n) + a ribonucleoside 5'-triphosphate = RNA(n+1) + diphosphate</text>
        <dbReference type="Rhea" id="RHEA:21248"/>
        <dbReference type="Rhea" id="RHEA-COMP:14527"/>
        <dbReference type="Rhea" id="RHEA-COMP:17342"/>
        <dbReference type="ChEBI" id="CHEBI:33019"/>
        <dbReference type="ChEBI" id="CHEBI:61557"/>
        <dbReference type="ChEBI" id="CHEBI:140395"/>
        <dbReference type="EC" id="2.7.7.6"/>
    </reaction>
</comment>
<comment type="subunit">
    <text evidence="2 3 4">Part of the 13-subunit RNA polymerase complex.</text>
</comment>
<comment type="subcellular location">
    <subcellularLocation>
        <location evidence="1 4">Cytoplasm</location>
    </subcellularLocation>
</comment>
<comment type="miscellaneous">
    <text evidence="7">Corresponds to about the last third of the bacterial beta' subunit.</text>
</comment>
<comment type="similarity">
    <text evidence="1 7">Belongs to the RNA polymerase beta' chain family.</text>
</comment>
<comment type="sequence caution" evidence="6">
    <conflict type="erroneous initiation">
        <sequence resource="EMBL-CDS" id="ACL36489"/>
    </conflict>
    <text>Extended N-terminus.</text>
</comment>
<feature type="chain" id="PRO_0000453786" description="DNA-directed RNA polymerase subunit Rpo1C">
    <location>
        <begin position="1"/>
        <end position="392"/>
    </location>
</feature>
<feature type="binding site" evidence="8">
    <location>
        <begin position="106"/>
        <end position="115"/>
    </location>
    <ligand>
        <name>dsDNA</name>
        <dbReference type="ChEBI" id="CHEBI:4705"/>
    </ligand>
</feature>
<feature type="binding site" evidence="8">
    <location>
        <position position="145"/>
    </location>
    <ligand>
        <name>dsDNA</name>
        <dbReference type="ChEBI" id="CHEBI:4705"/>
    </ligand>
</feature>
<feature type="binding site" evidence="8">
    <location>
        <position position="189"/>
    </location>
    <ligand>
        <name>dsDNA</name>
        <dbReference type="ChEBI" id="CHEBI:4705"/>
    </ligand>
</feature>
<feature type="binding site" evidence="8">
    <location>
        <begin position="218"/>
        <end position="226"/>
    </location>
    <ligand>
        <name>dsDNA</name>
        <dbReference type="ChEBI" id="CHEBI:4705"/>
    </ligand>
</feature>
<feature type="binding site" evidence="8">
    <location>
        <begin position="325"/>
        <end position="329"/>
    </location>
    <ligand>
        <name>dsDNA</name>
        <dbReference type="ChEBI" id="CHEBI:4705"/>
    </ligand>
</feature>
<feature type="binding site" evidence="8">
    <location>
        <begin position="345"/>
        <end position="350"/>
    </location>
    <ligand>
        <name>dsDNA</name>
        <dbReference type="ChEBI" id="CHEBI:4705"/>
    </ligand>
</feature>
<feature type="turn" evidence="16">
    <location>
        <begin position="4"/>
        <end position="6"/>
    </location>
</feature>
<feature type="helix" evidence="16">
    <location>
        <begin position="7"/>
        <end position="18"/>
    </location>
</feature>
<feature type="helix" evidence="15">
    <location>
        <begin position="21"/>
        <end position="23"/>
    </location>
</feature>
<feature type="helix" evidence="16">
    <location>
        <begin position="24"/>
        <end position="35"/>
    </location>
</feature>
<feature type="turn" evidence="15">
    <location>
        <begin position="39"/>
        <end position="41"/>
    </location>
</feature>
<feature type="helix" evidence="16">
    <location>
        <begin position="42"/>
        <end position="58"/>
    </location>
</feature>
<feature type="helix" evidence="16">
    <location>
        <begin position="67"/>
        <end position="80"/>
    </location>
</feature>
<feature type="helix" evidence="16">
    <location>
        <begin position="101"/>
        <end position="108"/>
    </location>
</feature>
<feature type="strand" evidence="16">
    <location>
        <begin position="118"/>
        <end position="121"/>
    </location>
</feature>
<feature type="turn" evidence="16">
    <location>
        <begin position="124"/>
        <end position="126"/>
    </location>
</feature>
<feature type="helix" evidence="16">
    <location>
        <begin position="127"/>
        <end position="129"/>
    </location>
</feature>
<feature type="helix" evidence="16">
    <location>
        <begin position="131"/>
        <end position="142"/>
    </location>
</feature>
<feature type="helix" evidence="16">
    <location>
        <begin position="146"/>
        <end position="149"/>
    </location>
</feature>
<feature type="strand" evidence="16">
    <location>
        <begin position="150"/>
        <end position="156"/>
    </location>
</feature>
<feature type="turn" evidence="16">
    <location>
        <begin position="157"/>
        <end position="160"/>
    </location>
</feature>
<feature type="strand" evidence="16">
    <location>
        <begin position="161"/>
        <end position="166"/>
    </location>
</feature>
<feature type="helix" evidence="16">
    <location>
        <begin position="168"/>
        <end position="171"/>
    </location>
</feature>
<feature type="turn" evidence="16">
    <location>
        <begin position="172"/>
        <end position="175"/>
    </location>
</feature>
<feature type="helix" evidence="16">
    <location>
        <begin position="177"/>
        <end position="187"/>
    </location>
</feature>
<feature type="strand" evidence="16">
    <location>
        <begin position="191"/>
        <end position="197"/>
    </location>
</feature>
<feature type="strand" evidence="16">
    <location>
        <begin position="199"/>
        <end position="206"/>
    </location>
</feature>
<feature type="strand" evidence="15">
    <location>
        <begin position="209"/>
        <end position="211"/>
    </location>
</feature>
<feature type="helix" evidence="16">
    <location>
        <begin position="217"/>
        <end position="226"/>
    </location>
</feature>
<feature type="strand" evidence="16">
    <location>
        <begin position="230"/>
        <end position="233"/>
    </location>
</feature>
<feature type="strand" evidence="16">
    <location>
        <begin position="236"/>
        <end position="242"/>
    </location>
</feature>
<feature type="strand" evidence="16">
    <location>
        <begin position="245"/>
        <end position="252"/>
    </location>
</feature>
<feature type="helix" evidence="16">
    <location>
        <begin position="255"/>
        <end position="258"/>
    </location>
</feature>
<feature type="turn" evidence="16">
    <location>
        <begin position="266"/>
        <end position="268"/>
    </location>
</feature>
<feature type="strand" evidence="16">
    <location>
        <begin position="270"/>
        <end position="272"/>
    </location>
</feature>
<feature type="helix" evidence="16">
    <location>
        <begin position="276"/>
        <end position="281"/>
    </location>
</feature>
<feature type="helix" evidence="16">
    <location>
        <begin position="283"/>
        <end position="299"/>
    </location>
</feature>
<feature type="helix" evidence="16">
    <location>
        <begin position="307"/>
        <end position="318"/>
    </location>
</feature>
<feature type="helix" evidence="16">
    <location>
        <begin position="319"/>
        <end position="321"/>
    </location>
</feature>
<feature type="strand" evidence="16">
    <location>
        <begin position="326"/>
        <end position="330"/>
    </location>
</feature>
<feature type="helix" evidence="16">
    <location>
        <begin position="331"/>
        <end position="334"/>
    </location>
</feature>
<feature type="helix" evidence="16">
    <location>
        <begin position="338"/>
        <end position="344"/>
    </location>
</feature>
<feature type="helix" evidence="16">
    <location>
        <begin position="348"/>
        <end position="356"/>
    </location>
</feature>
<feature type="helix" evidence="16">
    <location>
        <begin position="366"/>
        <end position="372"/>
    </location>
</feature>
<feature type="helix" evidence="16">
    <location>
        <begin position="379"/>
        <end position="381"/>
    </location>
</feature>
<feature type="strand" evidence="16">
    <location>
        <begin position="384"/>
        <end position="387"/>
    </location>
</feature>
<organism>
    <name type="scientific">Saccharolobus shibatae (strain ATCC 51178 / DSM 5389 / JCM 8931 / NBRC 15437 / B12)</name>
    <name type="common">Sulfolobus shibatae</name>
    <dbReference type="NCBI Taxonomy" id="523848"/>
    <lineage>
        <taxon>Archaea</taxon>
        <taxon>Thermoproteota</taxon>
        <taxon>Thermoprotei</taxon>
        <taxon>Sulfolobales</taxon>
        <taxon>Sulfolobaceae</taxon>
        <taxon>Saccharolobus</taxon>
    </lineage>
</organism>
<gene>
    <name evidence="1 5" type="primary">rpo1C</name>
    <name evidence="1" type="synonym">rpoA2</name>
    <name evidence="9" type="ORF">J5U23_00032</name>
</gene>
<proteinExistence type="evidence at protein level"/>
<accession>B8YB54</accession>
<accession>A0A8F5GRK3</accession>
<protein>
    <recommendedName>
        <fullName evidence="1 5">DNA-directed RNA polymerase subunit Rpo1C</fullName>
        <ecNumber evidence="1">2.7.7.6</ecNumber>
    </recommendedName>
    <alternativeName>
        <fullName evidence="1">DNA-directed RNA polymerase subunit A''</fullName>
    </alternativeName>
</protein>
<sequence>MIDEKDKSYLEEKVKQASNILPQKIVEDLKNLISNKEVLVTRDEIDKIFDLAIKEYSEGLIAPGEAIGIVAAQSVGEPGTQMTLRTFHFAGIRELNVTLGLPRLIEIVDAKKVPSTPMMTIYLTDEYKHDKEKALEVARKLEYTKIENVVSSTSIDIASMSIILQLDNEMLKDKGVTVDDVKKAINRLKLGEFVIDESEGNTLNISFANIDSIAALFKLRDKILNTKIKGIKGIKRAIVQKKGDEYIILTDGSNLSGVLSVKGVDIAKVETNNIREIEEVFGIEAAREIIIREISKVLAEQGLDVDMRHILLVADVMTRTGVVRQIGRHGVTGEKNSVLARAAFEVTVKHLLDAAARGDVEEFKGVVENIIIGHPIKLGTGMVELTMRPILR</sequence>
<reference evidence="10 11" key="1">
    <citation type="journal article" date="2009" name="PLoS Biol.">
        <title>Evolution of complex RNA polymerases: the complete archaeal RNA polymerase structure.</title>
        <authorList>
            <person name="Korkhin Y."/>
            <person name="Unligil U.M."/>
            <person name="Littlefield O."/>
            <person name="Nelson P.J."/>
            <person name="Stuart D.I."/>
            <person name="Sigler P.B."/>
            <person name="Bell S.D."/>
            <person name="Abrescia N.G."/>
        </authorList>
    </citation>
    <scope>NUCLEOTIDE SEQUENCE [GENOMIC DNA]</scope>
    <scope>X-RAY CRYSTALLOGRAPHY (3.35 ANGSTROMS) OF THE RNA POLYMERASE COMPLEX</scope>
    <scope>FUNCTION</scope>
    <scope>SUBUNIT</scope>
    <scope>NOMENCLATURE</scope>
    <source>
        <strain>ATCC 51178 / DSM 5389 / JCM 8931 / NBRC 15437 / B12</strain>
    </source>
</reference>
<reference evidence="9" key="2">
    <citation type="journal article" date="2021" name="Environ. Microbiol.">
        <title>New insights into the diversity and evolution of the archaeal mobilome from three complete genomes of Saccharolobus shibatae.</title>
        <authorList>
            <person name="Medvedeva S."/>
            <person name="Brandt D."/>
            <person name="Cvirkaite-Krupovic V."/>
            <person name="Liu Y."/>
            <person name="Severinov K."/>
            <person name="Ishino S."/>
            <person name="Ishino Y."/>
            <person name="Prangishvili D."/>
            <person name="Kalinowski J."/>
            <person name="Krupovic M."/>
        </authorList>
    </citation>
    <scope>NUCLEOTIDE SEQUENCE [LARGE SCALE GENOMIC DNA]</scope>
    <source>
        <strain>ATCC 51178 / DSM 5389 / JCM 8931 / NBRC 15437 / B12</strain>
    </source>
</reference>
<reference evidence="12" key="3">
    <citation type="journal article" date="2011" name="Biochem. Soc. Trans.">
        <title>Archaeal RNA polymerase: the influence of the protruding stalk in crystal packing and preliminary biophysical analysis of the Rpo13 subunit.</title>
        <authorList>
            <person name="Wojtas M."/>
            <person name="Peralta B."/>
            <person name="Ondiviela M."/>
            <person name="Mogni M."/>
            <person name="Bell S.D."/>
            <person name="Abrescia N.G."/>
        </authorList>
    </citation>
    <scope>X-RAY CRYSTALLOGRAPHY (3.80 ANGSTROMS) OF THE RNA POLYMERASE COMPLEX</scope>
    <scope>FUNCTION</scope>
    <scope>SUBUNIT</scope>
    <source>
        <strain>ATCC 51178 / DSM 5389 / JCM 8931 / NBRC 15437 / B12</strain>
    </source>
</reference>
<reference evidence="13 14" key="4">
    <citation type="journal article" date="2012" name="Nucleic Acids Res.">
        <title>Structural and functional analyses of the interaction of archaeal RNA polymerase with DNA.</title>
        <authorList>
            <person name="Wojtas M.N."/>
            <person name="Mogni M."/>
            <person name="Millet O."/>
            <person name="Bell S.D."/>
            <person name="Abrescia N.G."/>
        </authorList>
    </citation>
    <scope>X-RAY CRYSTALLOGRAPHY (3.20 ANGSTROMS) OF THE RNA POLYMERASE COMPLEX WITH AND WITHOUT DNA</scope>
    <scope>FUNCTION</scope>
    <scope>SUBUNIT</scope>
    <scope>SUBCELLULAR LOCATION</scope>
    <scope>DNA-BINDING</scope>
    <source>
        <strain>ATCC 51178 / DSM 5389 / JCM 8931 / NBRC 15437 / B12</strain>
    </source>
</reference>
<dbReference type="EC" id="2.7.7.6" evidence="1"/>
<dbReference type="EMBL" id="FJ515666">
    <property type="protein sequence ID" value="ACL36489.1"/>
    <property type="status" value="ALT_INIT"/>
    <property type="molecule type" value="Genomic_DNA"/>
</dbReference>
<dbReference type="EMBL" id="CP077717">
    <property type="protein sequence ID" value="QXJ27178.1"/>
    <property type="molecule type" value="Genomic_DNA"/>
</dbReference>
<dbReference type="RefSeq" id="WP_012711886.1">
    <property type="nucleotide sequence ID" value="NZ_CP077717.1"/>
</dbReference>
<dbReference type="PDB" id="2WAQ">
    <property type="method" value="X-ray"/>
    <property type="resolution" value="3.35 A"/>
    <property type="chains" value="C=8-392"/>
</dbReference>
<dbReference type="PDB" id="2WB1">
    <property type="method" value="X-ray"/>
    <property type="resolution" value="3.52 A"/>
    <property type="chains" value="C/Y=1-392"/>
</dbReference>
<dbReference type="PDB" id="2Y0S">
    <property type="method" value="X-ray"/>
    <property type="resolution" value="3.80 A"/>
    <property type="chains" value="C/Y=1-392"/>
</dbReference>
<dbReference type="PDB" id="4AYB">
    <property type="method" value="X-ray"/>
    <property type="resolution" value="3.20 A"/>
    <property type="chains" value="C=1-392"/>
</dbReference>
<dbReference type="PDB" id="4V8S">
    <property type="method" value="X-ray"/>
    <property type="resolution" value="4.32 A"/>
    <property type="chains" value="AY/BC=1-392"/>
</dbReference>
<dbReference type="PDBsum" id="2WAQ"/>
<dbReference type="PDBsum" id="2WB1"/>
<dbReference type="PDBsum" id="2Y0S"/>
<dbReference type="PDBsum" id="4AYB"/>
<dbReference type="PDBsum" id="4V8S"/>
<dbReference type="SMR" id="B8YB54"/>
<dbReference type="GeneID" id="84062225"/>
<dbReference type="KEGG" id="sshi:J5U23_00032"/>
<dbReference type="OrthoDB" id="372142at2157"/>
<dbReference type="BRENDA" id="2.7.7.6">
    <property type="organism ID" value="6162"/>
</dbReference>
<dbReference type="EvolutionaryTrace" id="B8YB54"/>
<dbReference type="Proteomes" id="UP000694018">
    <property type="component" value="Chromosome"/>
</dbReference>
<dbReference type="GO" id="GO:0005737">
    <property type="term" value="C:cytoplasm"/>
    <property type="evidence" value="ECO:0007669"/>
    <property type="project" value="UniProtKB-SubCell"/>
</dbReference>
<dbReference type="GO" id="GO:0000428">
    <property type="term" value="C:DNA-directed RNA polymerase complex"/>
    <property type="evidence" value="ECO:0000314"/>
    <property type="project" value="UniProtKB"/>
</dbReference>
<dbReference type="GO" id="GO:0003677">
    <property type="term" value="F:DNA binding"/>
    <property type="evidence" value="ECO:0007669"/>
    <property type="project" value="UniProtKB-UniRule"/>
</dbReference>
<dbReference type="GO" id="GO:0003899">
    <property type="term" value="F:DNA-directed RNA polymerase activity"/>
    <property type="evidence" value="ECO:0007669"/>
    <property type="project" value="UniProtKB-UniRule"/>
</dbReference>
<dbReference type="GO" id="GO:0006351">
    <property type="term" value="P:DNA-templated transcription"/>
    <property type="evidence" value="ECO:0007669"/>
    <property type="project" value="UniProtKB-UniRule"/>
</dbReference>
<dbReference type="CDD" id="cd06528">
    <property type="entry name" value="RNAP_A"/>
    <property type="match status" value="1"/>
</dbReference>
<dbReference type="Gene3D" id="1.10.150.390">
    <property type="match status" value="1"/>
</dbReference>
<dbReference type="HAMAP" id="MF_00411">
    <property type="entry name" value="RNApol_arch_Rpo1C"/>
    <property type="match status" value="1"/>
</dbReference>
<dbReference type="InterPro" id="IPR045867">
    <property type="entry name" value="DNA-dir_RpoC_beta_prime"/>
</dbReference>
<dbReference type="InterPro" id="IPR007081">
    <property type="entry name" value="RNA_pol_Rpb1_5"/>
</dbReference>
<dbReference type="InterPro" id="IPR012757">
    <property type="entry name" value="RPO1C"/>
</dbReference>
<dbReference type="NCBIfam" id="TIGR02389">
    <property type="entry name" value="RNA_pol_rpoA2"/>
    <property type="match status" value="1"/>
</dbReference>
<dbReference type="PANTHER" id="PTHR19376">
    <property type="entry name" value="DNA-DIRECTED RNA POLYMERASE"/>
    <property type="match status" value="1"/>
</dbReference>
<dbReference type="PANTHER" id="PTHR19376:SF32">
    <property type="entry name" value="DNA-DIRECTED RNA POLYMERASE III SUBUNIT RPC1"/>
    <property type="match status" value="1"/>
</dbReference>
<dbReference type="Pfam" id="PF04998">
    <property type="entry name" value="RNA_pol_Rpb1_5"/>
    <property type="match status" value="1"/>
</dbReference>
<dbReference type="SUPFAM" id="SSF64484">
    <property type="entry name" value="beta and beta-prime subunits of DNA dependent RNA-polymerase"/>
    <property type="match status" value="1"/>
</dbReference>
<name>RPO1C_SACSH</name>
<evidence type="ECO:0000255" key="1">
    <source>
        <dbReference type="HAMAP-Rule" id="MF_00411"/>
    </source>
</evidence>
<evidence type="ECO:0000269" key="2">
    <source>
    </source>
</evidence>
<evidence type="ECO:0000269" key="3">
    <source>
    </source>
</evidence>
<evidence type="ECO:0000269" key="4">
    <source>
    </source>
</evidence>
<evidence type="ECO:0000303" key="5">
    <source>
    </source>
</evidence>
<evidence type="ECO:0000305" key="6"/>
<evidence type="ECO:0000305" key="7">
    <source>
    </source>
</evidence>
<evidence type="ECO:0000305" key="8">
    <source>
    </source>
</evidence>
<evidence type="ECO:0000312" key="9">
    <source>
        <dbReference type="EMBL" id="QXJ27178.1"/>
    </source>
</evidence>
<evidence type="ECO:0007744" key="10">
    <source>
        <dbReference type="PDB" id="2WAQ"/>
    </source>
</evidence>
<evidence type="ECO:0007744" key="11">
    <source>
        <dbReference type="PDB" id="2WB1"/>
    </source>
</evidence>
<evidence type="ECO:0007744" key="12">
    <source>
        <dbReference type="PDB" id="2Y0S"/>
    </source>
</evidence>
<evidence type="ECO:0007744" key="13">
    <source>
        <dbReference type="PDB" id="4AYB"/>
    </source>
</evidence>
<evidence type="ECO:0007744" key="14">
    <source>
        <dbReference type="PDB" id="4V8S"/>
    </source>
</evidence>
<evidence type="ECO:0007829" key="15">
    <source>
        <dbReference type="PDB" id="2WAQ"/>
    </source>
</evidence>
<evidence type="ECO:0007829" key="16">
    <source>
        <dbReference type="PDB" id="4AYB"/>
    </source>
</evidence>